<accession>A0A194W8T8</accession>
<reference key="1">
    <citation type="journal article" date="2015" name="New Phytol.">
        <title>Genome sequence of Valsa canker pathogens uncovers a potential adaptation of colonization of woody bark.</title>
        <authorList>
            <person name="Yin Z."/>
            <person name="Liu H."/>
            <person name="Li Z."/>
            <person name="Ke X."/>
            <person name="Dou D."/>
            <person name="Gao X."/>
            <person name="Song N."/>
            <person name="Dai Q."/>
            <person name="Wu Y."/>
            <person name="Xu J.R."/>
            <person name="Kang Z."/>
            <person name="Huang L."/>
        </authorList>
    </citation>
    <scope>NUCLEOTIDE SEQUENCE [LARGE SCALE GENOMIC DNA]</scope>
    <source>
        <strain>03-8</strain>
    </source>
</reference>
<reference key="2">
    <citation type="journal article" date="2025" name="Microb. Pathog.">
        <title>Mitogen-activated protein (MAP) kinase signalling pathway VmMkh1-VmMkk1-VmSpm1 regulates cell wall integrity in Valsamali.</title>
        <authorList>
            <person name="Diao Y."/>
            <person name="Xiong X."/>
            <person name="Jin J."/>
            <person name="Yu C."/>
            <person name="Tian Y."/>
            <person name="Zhao C."/>
            <person name="Wu Y."/>
            <person name="Liu H."/>
        </authorList>
    </citation>
    <scope>FUNCTION</scope>
    <scope>DISRUPTION PHENOTYPE</scope>
</reference>
<name>MKH1_CYTMA</name>
<evidence type="ECO:0000255" key="1">
    <source>
        <dbReference type="PROSITE-ProRule" id="PRU00159"/>
    </source>
</evidence>
<evidence type="ECO:0000269" key="2">
    <source>
    </source>
</evidence>
<evidence type="ECO:0000303" key="3">
    <source>
    </source>
</evidence>
<evidence type="ECO:0000305" key="4"/>
<evidence type="ECO:0000305" key="5">
    <source>
    </source>
</evidence>
<organism>
    <name type="scientific">Cytospora mali</name>
    <name type="common">Apple Valsa canker fungus</name>
    <name type="synonym">Valsa mali</name>
    <dbReference type="NCBI Taxonomy" id="578113"/>
    <lineage>
        <taxon>Eukaryota</taxon>
        <taxon>Fungi</taxon>
        <taxon>Dikarya</taxon>
        <taxon>Ascomycota</taxon>
        <taxon>Pezizomycotina</taxon>
        <taxon>Sordariomycetes</taxon>
        <taxon>Sordariomycetidae</taxon>
        <taxon>Diaporthales</taxon>
        <taxon>Cytosporaceae</taxon>
        <taxon>Cytospora</taxon>
    </lineage>
</organism>
<proteinExistence type="inferred from homology"/>
<comment type="function">
    <text evidence="2">Mitogen-activated protein kinase kinase kinase, part of the mkh1-mkk1-spm1 MAPK cascade that regulates vegetative growth, conidial formation, colony surface hydrophobicity, osmotic stress, cell wall integrity maintenance, carbon and nitrogen source utilization, chitin distribution, septa formation, and pathogenicity.</text>
</comment>
<comment type="catalytic activity">
    <reaction evidence="5">
        <text>L-seryl-[protein] + ATP = O-phospho-L-seryl-[protein] + ADP + H(+)</text>
        <dbReference type="Rhea" id="RHEA:17989"/>
        <dbReference type="Rhea" id="RHEA-COMP:9863"/>
        <dbReference type="Rhea" id="RHEA-COMP:11604"/>
        <dbReference type="ChEBI" id="CHEBI:15378"/>
        <dbReference type="ChEBI" id="CHEBI:29999"/>
        <dbReference type="ChEBI" id="CHEBI:30616"/>
        <dbReference type="ChEBI" id="CHEBI:83421"/>
        <dbReference type="ChEBI" id="CHEBI:456216"/>
        <dbReference type="EC" id="2.7.11.24"/>
    </reaction>
    <physiologicalReaction direction="left-to-right" evidence="5">
        <dbReference type="Rhea" id="RHEA:17990"/>
    </physiologicalReaction>
</comment>
<comment type="catalytic activity">
    <reaction evidence="5">
        <text>L-threonyl-[protein] + ATP = O-phospho-L-threonyl-[protein] + ADP + H(+)</text>
        <dbReference type="Rhea" id="RHEA:46608"/>
        <dbReference type="Rhea" id="RHEA-COMP:11060"/>
        <dbReference type="Rhea" id="RHEA-COMP:11605"/>
        <dbReference type="ChEBI" id="CHEBI:15378"/>
        <dbReference type="ChEBI" id="CHEBI:30013"/>
        <dbReference type="ChEBI" id="CHEBI:30616"/>
        <dbReference type="ChEBI" id="CHEBI:61977"/>
        <dbReference type="ChEBI" id="CHEBI:456216"/>
        <dbReference type="EC" id="2.7.11.24"/>
    </reaction>
    <physiologicalReaction direction="left-to-right" evidence="5">
        <dbReference type="Rhea" id="RHEA:46609"/>
    </physiologicalReaction>
</comment>
<comment type="disruption phenotype">
    <text evidence="2">Does not affect significantly the growth rate but produces fewer conidia (PubMed:39631571). Inhibits significantly hyphal growth upon high osmotic stresses and in the presence of cell wall stress agents such as Congo red, calcofluor white or SDS (PubMed:39631571). Accumulates chitin at the hyphal tips (PubMed:39631571). Leads also to a looser distribution of spacers (PubMed:39631571).</text>
</comment>
<comment type="similarity">
    <text evidence="4">Belongs to the protein kinase superfamily. STE Ser/Thr protein kinase family. MAP kinase kinase kinase subfamily.</text>
</comment>
<sequence length="1849" mass="197301">MSKNIQRQRSISSISSRGVDRDRDPASGGLGLLSPYNSRSPLAGLHHSPGSLDATANQLSRPTFLLERKATEDIAKLDGVLFDDIPTLGSSNDHISSLGAGSPYPTINTSLAVTNPNYLSASSPGGPRRRANTASGPLSPAPPASPIDRLSKTTNRGSFVPSTARQPMNSQPPAPASSAPPPKQRTTSPSVASPPSQTRSQTVPYLSSNFGPTANMYGQRQPSGVDPSRPFHQVPLPPPPMSPPPAIGTINSIMTNIPPPPPRYPSAPAAAIHLPGPPGAPPPSGLPPPPGPPPNNTTNWQGTWIGAYGSYIPPPPPQQTHRPYNPQPYKTVNGQTIAIPPPPPPTESMQMSATYIPQGDSYGEGVGIPGLGMDDMAAWSATSQSSWLGGYNSIGSLAPTNASDTAASTPVDAYGSHNRDNSTTSNATSSGASGIPPELAAQWPLDRVLDWLQANNFSNDWRSTFRALDLHGNRFLEVGSANGGRGNFGMMHQLVYPRLAAECISSGTGWDQPREREEGKRMRRLIRHIVKGETPGTGMSSHTRKESISNTSLVPTSAGPDSGSPDTPIKAPGPGFSVGHPGGNHRKLLVGNFDDEGAHRRSPVASEPSEVGITFTERSSSNRGYSPAGSPAPTPGLFSSSTAPNLASSPGGRFGGHRNRNSTDSVSSNAAIYGSGVPPDASQVLRSQMNFGDMAKDTRRYGHDGGNRPSPLGDNASNGDRSAGASEPPGSAKEGKSFLSIFNHRKKKHHDDPDSPTSPMQHKSHSLGSRGNASETSLERPGSSVSTSHEHNTPASSMRSRRITTGRIFILATLDYWNYRMVDVSDVESASDLRQLICINLGLPDADGAQVYLTELGKFDHEDPLDDSQLVANKKVRADAAGSLKVFVRPGNMAGLAVNIGQSQNALSPAHLPAGAKMDEDTYARLNGQRRRSSSSPPASRQNTLTGGEHGKPTSTGADDDENKDPKSDDIAQQAEAHRIEMERKQQAYLAKRKHARENGNSPSENGTGSYTGIVGPKVIDFDEPRNSPFEDKKPFDSAFAPQRRAPAAPLDPSATLIKANSLSKRGSHQRNSQGSVDGFPSKRQGTGMTESPKHISEKRKPTNERQALGGIGAALAGMGRGLGGIAHPGGAGQRGTSPNRSSPGSAGESAGVASSTTDRGEDAKSRKPISSGNVSPTSSARTVSDEPPQLPKVVIKPRIFDGDSSSDEDSDDDSDDGLFAKPLAGRGGDDAAAKGKEPATKPVAKSPMSKHGTFWNDADSDGDEDPISESASNLNKRPSLTVNTKRGRKGLSVTFTSPDLPSSAGSKTAAGDEDDRSSRGSKRTPNTPHSEGWDSNNDKDVKLSRRKSFMEKDTSIWANRPPTDALINNLEDFFPNLDVDQPVLEEGELPGDLPPSPIAEAEEPHDQQQAKSMTTSRISNLYNDSDTLGSDESTLKALERPASIVSVARKNTRRSGGLGRMKSIREVAHKRYTQGAGAPPPVPAAPNNSNNSSSSGSKNSNLMRRKSTKMFNANIVQIRPERGSMILPQIPQDHLPSLPHNANNQIPKRQTTFRWFKGQLIGKGTYGRVYLGMNATTGEFLAVKEVEVNPKAAGGDKNKMKELVAALDQEIDTMQHLDHVNIVQYLGCERKETSISIFLEYIPGGSIGSCLRKHGKFEESVVSSLTRQTLSGLAYLHREGILHRDLKADNILLDVDGTAKISDFGISKKTDNIYGNDKTNSMQGSVFWMAPEVIRSQGEGYSAKVDIWSLGCVVLEMFAGRRPWSKDEAVGAIYKIANGETPPIPEEVSAAVTPVALSFMWDCFSVNPEERPTATKLLAEHPFCVFRDDYDFDQTELYAKIKGTWNTK</sequence>
<keyword id="KW-0067">ATP-binding</keyword>
<keyword id="KW-0183">Conidiation</keyword>
<keyword id="KW-0418">Kinase</keyword>
<keyword id="KW-0547">Nucleotide-binding</keyword>
<keyword id="KW-0723">Serine/threonine-protein kinase</keyword>
<keyword id="KW-0749">Sporulation</keyword>
<keyword id="KW-0808">Transferase</keyword>
<keyword id="KW-0843">Virulence</keyword>
<dbReference type="EC" id="2.7.11.24" evidence="5"/>
<dbReference type="EMBL" id="CM003105">
    <property type="protein sequence ID" value="KUI72495.1"/>
    <property type="molecule type" value="Genomic_DNA"/>
</dbReference>
<dbReference type="SMR" id="A0A194W8T8"/>
<dbReference type="OrthoDB" id="146925at147550"/>
<dbReference type="Proteomes" id="UP000078559">
    <property type="component" value="Chromosome 8"/>
</dbReference>
<dbReference type="GO" id="GO:0005524">
    <property type="term" value="F:ATP binding"/>
    <property type="evidence" value="ECO:0007669"/>
    <property type="project" value="UniProtKB-UniRule"/>
</dbReference>
<dbReference type="GO" id="GO:0004672">
    <property type="term" value="F:protein kinase activity"/>
    <property type="evidence" value="ECO:0007669"/>
    <property type="project" value="InterPro"/>
</dbReference>
<dbReference type="GO" id="GO:0000165">
    <property type="term" value="P:MAPK cascade"/>
    <property type="evidence" value="ECO:0007669"/>
    <property type="project" value="UniProtKB-ARBA"/>
</dbReference>
<dbReference type="FunFam" id="1.10.510.10:FF:000182">
    <property type="entry name" value="MAP kinase kinase kinase mkh1"/>
    <property type="match status" value="1"/>
</dbReference>
<dbReference type="FunFam" id="3.30.200.20:FF:000387">
    <property type="entry name" value="Serine/threonine-protein kinase STE11"/>
    <property type="match status" value="1"/>
</dbReference>
<dbReference type="Gene3D" id="1.10.510.10">
    <property type="entry name" value="Transferase(Phosphotransferase) domain 1"/>
    <property type="match status" value="1"/>
</dbReference>
<dbReference type="InterPro" id="IPR011009">
    <property type="entry name" value="Kinase-like_dom_sf"/>
</dbReference>
<dbReference type="InterPro" id="IPR050538">
    <property type="entry name" value="MAP_kinase_kinase_kinase"/>
</dbReference>
<dbReference type="InterPro" id="IPR000719">
    <property type="entry name" value="Prot_kinase_dom"/>
</dbReference>
<dbReference type="InterPro" id="IPR017441">
    <property type="entry name" value="Protein_kinase_ATP_BS"/>
</dbReference>
<dbReference type="InterPro" id="IPR008271">
    <property type="entry name" value="Ser/Thr_kinase_AS"/>
</dbReference>
<dbReference type="PANTHER" id="PTHR48016">
    <property type="entry name" value="MAP KINASE KINASE KINASE SSK2-RELATED-RELATED"/>
    <property type="match status" value="1"/>
</dbReference>
<dbReference type="PANTHER" id="PTHR48016:SF48">
    <property type="entry name" value="SERINE_THREONINE-PROTEIN KINASE BCK1_SLK1_SSP31"/>
    <property type="match status" value="1"/>
</dbReference>
<dbReference type="Pfam" id="PF00069">
    <property type="entry name" value="Pkinase"/>
    <property type="match status" value="1"/>
</dbReference>
<dbReference type="SMART" id="SM00220">
    <property type="entry name" value="S_TKc"/>
    <property type="match status" value="1"/>
</dbReference>
<dbReference type="SUPFAM" id="SSF56112">
    <property type="entry name" value="Protein kinase-like (PK-like)"/>
    <property type="match status" value="1"/>
</dbReference>
<dbReference type="PROSITE" id="PS00107">
    <property type="entry name" value="PROTEIN_KINASE_ATP"/>
    <property type="match status" value="1"/>
</dbReference>
<dbReference type="PROSITE" id="PS50011">
    <property type="entry name" value="PROTEIN_KINASE_DOM"/>
    <property type="match status" value="1"/>
</dbReference>
<dbReference type="PROSITE" id="PS00108">
    <property type="entry name" value="PROTEIN_KINASE_ST"/>
    <property type="match status" value="1"/>
</dbReference>
<gene>
    <name evidence="3" type="primary">mkh1</name>
    <name type="ORF">VM1G_08015</name>
</gene>
<protein>
    <recommendedName>
        <fullName evidence="3">Mitogen-activated protein kinase kinase kinase mkh1</fullName>
        <shortName evidence="3">MAP kinase kinase kinase mkh1</shortName>
        <shortName evidence="3">MAPKKK mkh1</shortName>
        <ecNumber evidence="5">2.7.11.24</ecNumber>
    </recommendedName>
</protein>
<feature type="chain" id="PRO_0000462553" description="Mitogen-activated protein kinase kinase kinase mkh1">
    <location>
        <begin position="1"/>
        <end position="1849"/>
    </location>
</feature>
<feature type="domain" description="Protein kinase" evidence="1">
    <location>
        <begin position="1556"/>
        <end position="1825"/>
    </location>
</feature>
<feature type="active site" description="Proton acceptor" evidence="1">
    <location>
        <position position="1686"/>
    </location>
</feature>
<feature type="binding site" evidence="1">
    <location>
        <begin position="1562"/>
        <end position="1570"/>
    </location>
    <ligand>
        <name>ATP</name>
        <dbReference type="ChEBI" id="CHEBI:30616"/>
    </ligand>
</feature>
<feature type="binding site" evidence="1">
    <location>
        <position position="1585"/>
    </location>
    <ligand>
        <name>ATP</name>
        <dbReference type="ChEBI" id="CHEBI:30616"/>
    </ligand>
</feature>